<accession>Q07401</accession>
<proteinExistence type="inferred from homology"/>
<dbReference type="EMBL" id="D14439">
    <property type="protein sequence ID" value="BAA03326.1"/>
    <property type="molecule type" value="Genomic_DNA"/>
</dbReference>
<dbReference type="PIR" id="D36950">
    <property type="entry name" value="D36950"/>
</dbReference>
<dbReference type="SMR" id="Q07401"/>
<dbReference type="GO" id="GO:0005737">
    <property type="term" value="C:cytoplasm"/>
    <property type="evidence" value="ECO:0007669"/>
    <property type="project" value="UniProtKB-SubCell"/>
</dbReference>
<dbReference type="GO" id="GO:0016151">
    <property type="term" value="F:nickel cation binding"/>
    <property type="evidence" value="ECO:0007669"/>
    <property type="project" value="UniProtKB-UniRule"/>
</dbReference>
<dbReference type="GO" id="GO:0051082">
    <property type="term" value="F:unfolded protein binding"/>
    <property type="evidence" value="ECO:0007669"/>
    <property type="project" value="UniProtKB-UniRule"/>
</dbReference>
<dbReference type="GO" id="GO:0006457">
    <property type="term" value="P:protein folding"/>
    <property type="evidence" value="ECO:0007669"/>
    <property type="project" value="InterPro"/>
</dbReference>
<dbReference type="GO" id="GO:0065003">
    <property type="term" value="P:protein-containing complex assembly"/>
    <property type="evidence" value="ECO:0007669"/>
    <property type="project" value="InterPro"/>
</dbReference>
<dbReference type="GO" id="GO:0019627">
    <property type="term" value="P:urea metabolic process"/>
    <property type="evidence" value="ECO:0007669"/>
    <property type="project" value="InterPro"/>
</dbReference>
<dbReference type="CDD" id="cd00571">
    <property type="entry name" value="UreE"/>
    <property type="match status" value="1"/>
</dbReference>
<dbReference type="Gene3D" id="2.60.260.20">
    <property type="entry name" value="Urease metallochaperone UreE, N-terminal domain"/>
    <property type="match status" value="1"/>
</dbReference>
<dbReference type="Gene3D" id="3.30.70.790">
    <property type="entry name" value="UreE, C-terminal domain"/>
    <property type="match status" value="1"/>
</dbReference>
<dbReference type="HAMAP" id="MF_00822">
    <property type="entry name" value="UreE"/>
    <property type="match status" value="1"/>
</dbReference>
<dbReference type="InterPro" id="IPR012406">
    <property type="entry name" value="UreE"/>
</dbReference>
<dbReference type="InterPro" id="IPR007864">
    <property type="entry name" value="UreE_C_dom"/>
</dbReference>
<dbReference type="InterPro" id="IPR004029">
    <property type="entry name" value="UreE_N"/>
</dbReference>
<dbReference type="InterPro" id="IPR036118">
    <property type="entry name" value="UreE_N_sf"/>
</dbReference>
<dbReference type="NCBIfam" id="NF009755">
    <property type="entry name" value="PRK13261.2-1"/>
    <property type="match status" value="1"/>
</dbReference>
<dbReference type="Pfam" id="PF05194">
    <property type="entry name" value="UreE_C"/>
    <property type="match status" value="1"/>
</dbReference>
<dbReference type="Pfam" id="PF02814">
    <property type="entry name" value="UreE_N"/>
    <property type="match status" value="1"/>
</dbReference>
<dbReference type="PIRSF" id="PIRSF036402">
    <property type="entry name" value="Ureas_acces_UreE"/>
    <property type="match status" value="1"/>
</dbReference>
<dbReference type="SMART" id="SM00988">
    <property type="entry name" value="UreE_N"/>
    <property type="match status" value="1"/>
</dbReference>
<dbReference type="SUPFAM" id="SSF69737">
    <property type="entry name" value="Urease metallochaperone UreE, C-terminal domain"/>
    <property type="match status" value="1"/>
</dbReference>
<dbReference type="SUPFAM" id="SSF69287">
    <property type="entry name" value="Urease metallochaperone UreE, N-terminal domain"/>
    <property type="match status" value="1"/>
</dbReference>
<feature type="chain" id="PRO_0000067630" description="Urease accessory protein UreE">
    <location>
        <begin position="1"/>
        <end position="148"/>
    </location>
</feature>
<sequence length="148" mass="17399">MMVEKVVGNITTLEKRVPHIERVYMRSDDLVKRVKRVVTDHGKEIGIRLKEHQELQDGDILYMDDHNMIVISVLEDDVLTIKPTSMQQMGEIAHQLGNRHLPAQFEGNEMIVQYDYLVEELLQKLSIPFTRENRKMKQAFRPIGHRHE</sequence>
<reference key="1">
    <citation type="journal article" date="1994" name="J. Bacteriol.">
        <title>Cloning, sequencing, and expression of thermophilic Bacillus sp. strain TB-90 urease gene complex in Escherichia coli.</title>
        <authorList>
            <person name="Maeda M."/>
            <person name="Hidaka M."/>
            <person name="Nakamura A."/>
            <person name="Masaki H."/>
            <person name="Uozumi T."/>
        </authorList>
    </citation>
    <scope>NUCLEOTIDE SEQUENCE [GENOMIC DNA]</scope>
</reference>
<comment type="function">
    <text evidence="1">Involved in urease metallocenter assembly. Binds nickel. Probably functions as a nickel donor during metallocenter assembly.</text>
</comment>
<comment type="subcellular location">
    <subcellularLocation>
        <location evidence="1">Cytoplasm</location>
    </subcellularLocation>
</comment>
<comment type="similarity">
    <text evidence="1">Belongs to the UreE family.</text>
</comment>
<protein>
    <recommendedName>
        <fullName evidence="1">Urease accessory protein UreE</fullName>
    </recommendedName>
</protein>
<gene>
    <name evidence="1" type="primary">ureE</name>
</gene>
<name>UREE_BACSB</name>
<evidence type="ECO:0000255" key="1">
    <source>
        <dbReference type="HAMAP-Rule" id="MF_00822"/>
    </source>
</evidence>
<organism>
    <name type="scientific">Bacillus sp. (strain TB-90)</name>
    <dbReference type="NCBI Taxonomy" id="36824"/>
    <lineage>
        <taxon>Bacteria</taxon>
        <taxon>Bacillati</taxon>
        <taxon>Bacillota</taxon>
        <taxon>Bacilli</taxon>
        <taxon>Bacillales</taxon>
        <taxon>Bacillaceae</taxon>
        <taxon>Bacillus</taxon>
    </lineage>
</organism>
<keyword id="KW-0143">Chaperone</keyword>
<keyword id="KW-0963">Cytoplasm</keyword>
<keyword id="KW-0533">Nickel</keyword>
<keyword id="KW-0996">Nickel insertion</keyword>